<comment type="function">
    <text evidence="1">Cleaves peptides in various proteins in a process that requires ATP hydrolysis. Has a chymotrypsin-like activity. Plays a major role in the degradation of misfolded proteins.</text>
</comment>
<comment type="catalytic activity">
    <reaction evidence="1">
        <text>Hydrolysis of proteins to small peptides in the presence of ATP and magnesium. alpha-casein is the usual test substrate. In the absence of ATP, only oligopeptides shorter than five residues are hydrolyzed (such as succinyl-Leu-Tyr-|-NHMec, and Leu-Tyr-Leu-|-Tyr-Trp, in which cleavage of the -Tyr-|-Leu- and -Tyr-|-Trp bonds also occurs).</text>
        <dbReference type="EC" id="3.4.21.92"/>
    </reaction>
</comment>
<comment type="subunit">
    <text evidence="1">Fourteen ClpP subunits assemble into 2 heptameric rings which stack back to back to give a disk-like structure with a central cavity, resembling the structure of eukaryotic proteasomes.</text>
</comment>
<comment type="subcellular location">
    <subcellularLocation>
        <location evidence="1">Cytoplasm</location>
    </subcellularLocation>
</comment>
<comment type="similarity">
    <text evidence="1">Belongs to the peptidase S14 family.</text>
</comment>
<proteinExistence type="inferred from homology"/>
<keyword id="KW-0963">Cytoplasm</keyword>
<keyword id="KW-0378">Hydrolase</keyword>
<keyword id="KW-0645">Protease</keyword>
<keyword id="KW-0720">Serine protease</keyword>
<feature type="chain" id="PRO_0000226435" description="ATP-dependent Clp protease proteolytic subunit 1">
    <location>
        <begin position="1"/>
        <end position="192"/>
    </location>
</feature>
<feature type="active site" description="Nucleophile" evidence="1">
    <location>
        <position position="92"/>
    </location>
</feature>
<feature type="active site" evidence="1">
    <location>
        <position position="117"/>
    </location>
</feature>
<evidence type="ECO:0000255" key="1">
    <source>
        <dbReference type="HAMAP-Rule" id="MF_00444"/>
    </source>
</evidence>
<gene>
    <name evidence="1" type="primary">clpP1</name>
    <name type="ordered locus">CTA_0471</name>
</gene>
<name>CLPP1_CHLTA</name>
<accession>Q3KLR9</accession>
<dbReference type="EC" id="3.4.21.92" evidence="1"/>
<dbReference type="EMBL" id="CP000051">
    <property type="protein sequence ID" value="AAX50703.1"/>
    <property type="molecule type" value="Genomic_DNA"/>
</dbReference>
<dbReference type="RefSeq" id="WP_009871785.1">
    <property type="nucleotide sequence ID" value="NC_007429.1"/>
</dbReference>
<dbReference type="SMR" id="Q3KLR9"/>
<dbReference type="MEROPS" id="S14.005"/>
<dbReference type="KEGG" id="cta:CTA_0471"/>
<dbReference type="HOGENOM" id="CLU_058707_4_0_0"/>
<dbReference type="Proteomes" id="UP000002532">
    <property type="component" value="Chromosome"/>
</dbReference>
<dbReference type="GO" id="GO:0005737">
    <property type="term" value="C:cytoplasm"/>
    <property type="evidence" value="ECO:0007669"/>
    <property type="project" value="UniProtKB-SubCell"/>
</dbReference>
<dbReference type="GO" id="GO:0009368">
    <property type="term" value="C:endopeptidase Clp complex"/>
    <property type="evidence" value="ECO:0007669"/>
    <property type="project" value="TreeGrafter"/>
</dbReference>
<dbReference type="GO" id="GO:0004176">
    <property type="term" value="F:ATP-dependent peptidase activity"/>
    <property type="evidence" value="ECO:0007669"/>
    <property type="project" value="InterPro"/>
</dbReference>
<dbReference type="GO" id="GO:0051117">
    <property type="term" value="F:ATPase binding"/>
    <property type="evidence" value="ECO:0007669"/>
    <property type="project" value="TreeGrafter"/>
</dbReference>
<dbReference type="GO" id="GO:0004252">
    <property type="term" value="F:serine-type endopeptidase activity"/>
    <property type="evidence" value="ECO:0007669"/>
    <property type="project" value="UniProtKB-UniRule"/>
</dbReference>
<dbReference type="GO" id="GO:0006515">
    <property type="term" value="P:protein quality control for misfolded or incompletely synthesized proteins"/>
    <property type="evidence" value="ECO:0007669"/>
    <property type="project" value="TreeGrafter"/>
</dbReference>
<dbReference type="CDD" id="cd07017">
    <property type="entry name" value="S14_ClpP_2"/>
    <property type="match status" value="1"/>
</dbReference>
<dbReference type="FunFam" id="3.90.226.10:FF:000055">
    <property type="entry name" value="ATP-dependent Clp protease proteolytic subunit"/>
    <property type="match status" value="1"/>
</dbReference>
<dbReference type="Gene3D" id="3.90.226.10">
    <property type="entry name" value="2-enoyl-CoA Hydratase, Chain A, domain 1"/>
    <property type="match status" value="1"/>
</dbReference>
<dbReference type="HAMAP" id="MF_00444">
    <property type="entry name" value="ClpP"/>
    <property type="match status" value="1"/>
</dbReference>
<dbReference type="InterPro" id="IPR001907">
    <property type="entry name" value="ClpP"/>
</dbReference>
<dbReference type="InterPro" id="IPR029045">
    <property type="entry name" value="ClpP/crotonase-like_dom_sf"/>
</dbReference>
<dbReference type="InterPro" id="IPR023562">
    <property type="entry name" value="ClpP/TepA"/>
</dbReference>
<dbReference type="InterPro" id="IPR033135">
    <property type="entry name" value="ClpP_His_AS"/>
</dbReference>
<dbReference type="NCBIfam" id="NF009205">
    <property type="entry name" value="PRK12553.1"/>
    <property type="match status" value="1"/>
</dbReference>
<dbReference type="PANTHER" id="PTHR10381">
    <property type="entry name" value="ATP-DEPENDENT CLP PROTEASE PROTEOLYTIC SUBUNIT"/>
    <property type="match status" value="1"/>
</dbReference>
<dbReference type="PANTHER" id="PTHR10381:SF11">
    <property type="entry name" value="ATP-DEPENDENT CLP PROTEASE PROTEOLYTIC SUBUNIT, MITOCHONDRIAL"/>
    <property type="match status" value="1"/>
</dbReference>
<dbReference type="Pfam" id="PF00574">
    <property type="entry name" value="CLP_protease"/>
    <property type="match status" value="1"/>
</dbReference>
<dbReference type="PRINTS" id="PR00127">
    <property type="entry name" value="CLPPROTEASEP"/>
</dbReference>
<dbReference type="SUPFAM" id="SSF52096">
    <property type="entry name" value="ClpP/crotonase"/>
    <property type="match status" value="1"/>
</dbReference>
<dbReference type="PROSITE" id="PS00382">
    <property type="entry name" value="CLP_PROTEASE_HIS"/>
    <property type="match status" value="1"/>
</dbReference>
<protein>
    <recommendedName>
        <fullName evidence="1">ATP-dependent Clp protease proteolytic subunit 1</fullName>
        <ecNumber evidence="1">3.4.21.92</ecNumber>
    </recommendedName>
    <alternativeName>
        <fullName evidence="1">Endopeptidase Clp 1</fullName>
    </alternativeName>
</protein>
<reference key="1">
    <citation type="journal article" date="2005" name="Infect. Immun.">
        <title>Comparative genomic analysis of Chlamydia trachomatis oculotropic and genitotropic strains.</title>
        <authorList>
            <person name="Carlson J.H."/>
            <person name="Porcella S.F."/>
            <person name="McClarty G."/>
            <person name="Caldwell H.D."/>
        </authorList>
    </citation>
    <scope>NUCLEOTIDE SEQUENCE [LARGE SCALE GENOMIC DNA]</scope>
    <source>
        <strain>ATCC VR-571B / DSM 19440 / HAR-13</strain>
    </source>
</reference>
<sequence length="192" mass="21162">MPEGEMMHKLQDVIDRKLLDSRRIFFSEPVTEKSATEAIKKLWYLELTNPGQPIVFVINSPGGSVDAGFAVWDQIKMISSPLTTVVTGLAASMGSVLSLCAVPGRRFATPHARIMIHQPSIGGTITGQATDLDIHAREILKTKARIIDVYVEATGQSREVIEKAIDRDMWMSANEAMEFGLLDGILFSFNDL</sequence>
<organism>
    <name type="scientific">Chlamydia trachomatis serovar A (strain ATCC VR-571B / DSM 19440 / HAR-13)</name>
    <dbReference type="NCBI Taxonomy" id="315277"/>
    <lineage>
        <taxon>Bacteria</taxon>
        <taxon>Pseudomonadati</taxon>
        <taxon>Chlamydiota</taxon>
        <taxon>Chlamydiia</taxon>
        <taxon>Chlamydiales</taxon>
        <taxon>Chlamydiaceae</taxon>
        <taxon>Chlamydia/Chlamydophila group</taxon>
        <taxon>Chlamydia</taxon>
    </lineage>
</organism>